<comment type="function">
    <text evidence="2 3">Serine protease that cleaves beta-casein/CSN2 as well as several extracellular matrix (ECM) proteoglycans such as decorin/DCN, biglycan/BGN and fibronectin/FN1. Inhibits signaling mediated by TGF-beta family proteins possibly indirectly by degradation of these ECM proteoglycans (By similarity). May act as a tumor suppressor. Negatively regulates, in vitro, trophoblast invasion during placental development and may be involved in the development of the placenta in vivo. May also have a role in ovarian development, granulosa cell differentiation and luteinization (By similarity).</text>
</comment>
<comment type="subunit">
    <text evidence="2 3">Homotrimer (By similarity). Interacts with TGFB1; the interaction inhibits TGFB-mediated signaling. Interacts with BMP4; the interaction inhibits BMP4-mediated signaling. Interacts with TGFB2, GDF5 and MYH9 (By similarity).</text>
</comment>
<comment type="subcellular location">
    <subcellularLocation>
        <location evidence="2">Secreted</location>
    </subcellularLocation>
    <text evidence="2">Secretion increased during decidualization of endometrial stromal cells.</text>
</comment>
<comment type="alternative products">
    <event type="alternative splicing"/>
    <isoform>
        <id>D3ZA76-1</id>
        <name>1</name>
        <sequence type="displayed"/>
    </isoform>
    <isoform>
        <id>D3ZA76-2</id>
        <name>2</name>
        <sequence type="described" ref="VSP_043827 VSP_043828"/>
    </isoform>
</comment>
<comment type="tissue specificity">
    <text evidence="8">Expressed in the ovary, essentially in granulosa cells in a follicle-stage specific manner. Highest levels found in large luteinizing granulosa cells.</text>
</comment>
<comment type="developmental stage">
    <text evidence="8">In the developing ovary, high expression, especially of the longer isoform, at 12 days of age after birth. Expression restricted to the interstitial cells surrounding the follicles. Levels are further increased during ovarian maturation.</text>
</comment>
<comment type="similarity">
    <text evidence="10">Belongs to the peptidase S1C family.</text>
</comment>
<protein>
    <recommendedName>
        <fullName>Serine protease HTRA3</fullName>
        <ecNumber>3.4.21.-</ecNumber>
    </recommendedName>
    <alternativeName>
        <fullName>High-temperature requirement factor A3</fullName>
    </alternativeName>
    <alternativeName>
        <fullName>Pregnancy-related serine protease</fullName>
    </alternativeName>
</protein>
<dbReference type="EC" id="3.4.21.-"/>
<dbReference type="RefSeq" id="NP_001257956.1">
    <molecule id="D3ZA76-1"/>
    <property type="nucleotide sequence ID" value="NM_001271027.1"/>
</dbReference>
<dbReference type="RefSeq" id="XP_017454804.1">
    <molecule id="D3ZA76-2"/>
    <property type="nucleotide sequence ID" value="XM_017599315.3"/>
</dbReference>
<dbReference type="SMR" id="D3ZA76"/>
<dbReference type="FunCoup" id="D3ZA76">
    <property type="interactions" value="63"/>
</dbReference>
<dbReference type="STRING" id="10116.ENSRNOP00000010852"/>
<dbReference type="PhosphoSitePlus" id="D3ZA76"/>
<dbReference type="PaxDb" id="10116-ENSRNOP00000010852"/>
<dbReference type="Ensembl" id="ENSRNOT00000010852.9">
    <molecule id="D3ZA76-1"/>
    <property type="protein sequence ID" value="ENSRNOP00000010852.5"/>
    <property type="gene ID" value="ENSRNOG00000008182.9"/>
</dbReference>
<dbReference type="Ensembl" id="ENSRNOT00000103981.1">
    <molecule id="D3ZA76-2"/>
    <property type="protein sequence ID" value="ENSRNOP00000093047.1"/>
    <property type="gene ID" value="ENSRNOG00000008182.9"/>
</dbReference>
<dbReference type="GeneID" id="360959"/>
<dbReference type="KEGG" id="rno:360959"/>
<dbReference type="AGR" id="RGD:1308120"/>
<dbReference type="CTD" id="94031"/>
<dbReference type="RGD" id="1308120">
    <property type="gene designation" value="Htra3"/>
</dbReference>
<dbReference type="eggNOG" id="ENOG502QT3F">
    <property type="taxonomic scope" value="Eukaryota"/>
</dbReference>
<dbReference type="GeneTree" id="ENSGT00940000159570"/>
<dbReference type="HOGENOM" id="CLU_020120_6_2_1"/>
<dbReference type="InParanoid" id="D3ZA76"/>
<dbReference type="OMA" id="YDAKAYK"/>
<dbReference type="OrthoDB" id="4217619at2759"/>
<dbReference type="TreeFam" id="TF323480"/>
<dbReference type="PRO" id="PR:D3ZA76"/>
<dbReference type="Proteomes" id="UP000002494">
    <property type="component" value="Chromosome 14"/>
</dbReference>
<dbReference type="Bgee" id="ENSRNOG00000008182">
    <property type="expression patterns" value="Expressed in heart and 19 other cell types or tissues"/>
</dbReference>
<dbReference type="GO" id="GO:0005576">
    <property type="term" value="C:extracellular region"/>
    <property type="evidence" value="ECO:0007669"/>
    <property type="project" value="UniProtKB-SubCell"/>
</dbReference>
<dbReference type="GO" id="GO:0004175">
    <property type="term" value="F:endopeptidase activity"/>
    <property type="evidence" value="ECO:0000266"/>
    <property type="project" value="RGD"/>
</dbReference>
<dbReference type="GO" id="GO:0042802">
    <property type="term" value="F:identical protein binding"/>
    <property type="evidence" value="ECO:0000266"/>
    <property type="project" value="RGD"/>
</dbReference>
<dbReference type="GO" id="GO:0004252">
    <property type="term" value="F:serine-type endopeptidase activity"/>
    <property type="evidence" value="ECO:0000318"/>
    <property type="project" value="GO_Central"/>
</dbReference>
<dbReference type="GO" id="GO:0008236">
    <property type="term" value="F:serine-type peptidase activity"/>
    <property type="evidence" value="ECO:0000250"/>
    <property type="project" value="UniProtKB"/>
</dbReference>
<dbReference type="GO" id="GO:0030514">
    <property type="term" value="P:negative regulation of BMP signaling pathway"/>
    <property type="evidence" value="ECO:0000250"/>
    <property type="project" value="UniProtKB"/>
</dbReference>
<dbReference type="GO" id="GO:0030512">
    <property type="term" value="P:negative regulation of transforming growth factor beta receptor signaling pathway"/>
    <property type="evidence" value="ECO:0000250"/>
    <property type="project" value="UniProtKB"/>
</dbReference>
<dbReference type="GO" id="GO:0006508">
    <property type="term" value="P:proteolysis"/>
    <property type="evidence" value="ECO:0000250"/>
    <property type="project" value="UniProtKB"/>
</dbReference>
<dbReference type="CDD" id="cd06785">
    <property type="entry name" value="cpPDZ_HtrA-like"/>
    <property type="match status" value="1"/>
</dbReference>
<dbReference type="CDD" id="cd00104">
    <property type="entry name" value="KAZAL_FS"/>
    <property type="match status" value="1"/>
</dbReference>
<dbReference type="FunFam" id="2.40.10.120:FF:000002">
    <property type="entry name" value="HtrA serine peptidase 3"/>
    <property type="match status" value="1"/>
</dbReference>
<dbReference type="FunFam" id="4.10.40.20:FF:000004">
    <property type="entry name" value="HtrA serine peptidase 3"/>
    <property type="match status" value="1"/>
</dbReference>
<dbReference type="Gene3D" id="2.30.42.10">
    <property type="match status" value="1"/>
</dbReference>
<dbReference type="Gene3D" id="2.40.10.120">
    <property type="match status" value="1"/>
</dbReference>
<dbReference type="Gene3D" id="3.30.60.30">
    <property type="match status" value="1"/>
</dbReference>
<dbReference type="Gene3D" id="4.10.40.20">
    <property type="match status" value="1"/>
</dbReference>
<dbReference type="InterPro" id="IPR009030">
    <property type="entry name" value="Growth_fac_rcpt_cys_sf"/>
</dbReference>
<dbReference type="InterPro" id="IPR000867">
    <property type="entry name" value="IGFBP-like"/>
</dbReference>
<dbReference type="InterPro" id="IPR002350">
    <property type="entry name" value="Kazal_dom"/>
</dbReference>
<dbReference type="InterPro" id="IPR036058">
    <property type="entry name" value="Kazal_dom_sf"/>
</dbReference>
<dbReference type="InterPro" id="IPR001478">
    <property type="entry name" value="PDZ"/>
</dbReference>
<dbReference type="InterPro" id="IPR036034">
    <property type="entry name" value="PDZ_sf"/>
</dbReference>
<dbReference type="InterPro" id="IPR009003">
    <property type="entry name" value="Peptidase_S1_PA"/>
</dbReference>
<dbReference type="InterPro" id="IPR001940">
    <property type="entry name" value="Peptidase_S1C"/>
</dbReference>
<dbReference type="PANTHER" id="PTHR22939">
    <property type="entry name" value="SERINE PROTEASE FAMILY S1C HTRA-RELATED"/>
    <property type="match status" value="1"/>
</dbReference>
<dbReference type="PANTHER" id="PTHR22939:SF14">
    <property type="entry name" value="SERINE PROTEASE HTRA3"/>
    <property type="match status" value="1"/>
</dbReference>
<dbReference type="Pfam" id="PF00219">
    <property type="entry name" value="IGFBP"/>
    <property type="match status" value="1"/>
</dbReference>
<dbReference type="Pfam" id="PF07648">
    <property type="entry name" value="Kazal_2"/>
    <property type="match status" value="1"/>
</dbReference>
<dbReference type="Pfam" id="PF13180">
    <property type="entry name" value="PDZ_2"/>
    <property type="match status" value="1"/>
</dbReference>
<dbReference type="Pfam" id="PF13365">
    <property type="entry name" value="Trypsin_2"/>
    <property type="match status" value="1"/>
</dbReference>
<dbReference type="PRINTS" id="PR00834">
    <property type="entry name" value="PROTEASES2C"/>
</dbReference>
<dbReference type="SMART" id="SM00121">
    <property type="entry name" value="IB"/>
    <property type="match status" value="1"/>
</dbReference>
<dbReference type="SMART" id="SM00280">
    <property type="entry name" value="KAZAL"/>
    <property type="match status" value="1"/>
</dbReference>
<dbReference type="SMART" id="SM00228">
    <property type="entry name" value="PDZ"/>
    <property type="match status" value="1"/>
</dbReference>
<dbReference type="SUPFAM" id="SSF57184">
    <property type="entry name" value="Growth factor receptor domain"/>
    <property type="match status" value="1"/>
</dbReference>
<dbReference type="SUPFAM" id="SSF100895">
    <property type="entry name" value="Kazal-type serine protease inhibitors"/>
    <property type="match status" value="1"/>
</dbReference>
<dbReference type="SUPFAM" id="SSF50156">
    <property type="entry name" value="PDZ domain-like"/>
    <property type="match status" value="1"/>
</dbReference>
<dbReference type="SUPFAM" id="SSF50494">
    <property type="entry name" value="Trypsin-like serine proteases"/>
    <property type="match status" value="1"/>
</dbReference>
<dbReference type="PROSITE" id="PS51323">
    <property type="entry name" value="IGFBP_N_2"/>
    <property type="match status" value="1"/>
</dbReference>
<dbReference type="PROSITE" id="PS51465">
    <property type="entry name" value="KAZAL_2"/>
    <property type="match status" value="1"/>
</dbReference>
<dbReference type="PROSITE" id="PS50106">
    <property type="entry name" value="PDZ"/>
    <property type="match status" value="1"/>
</dbReference>
<reference key="1">
    <citation type="journal article" date="2009" name="J. Exp. Zool. B Mol. Dev. Evol.">
        <title>Evolutionary conservation of mammalian HTRA3 and its developmental regulation in the rat ovary.</title>
        <authorList>
            <person name="Bowden M."/>
            <person name="Drummond A.E."/>
            <person name="Salamonsen L.A."/>
            <person name="Findlay J.K."/>
            <person name="Nie G."/>
        </authorList>
    </citation>
    <scope>NUCLEOTIDE SEQUENCE [MRNA] (ISOFORMS 1 AND 2)</scope>
    <scope>TISSUE SPECIFICITY</scope>
    <scope>DEVELOPMENTAL STAGE</scope>
</reference>
<reference key="2">
    <citation type="journal article" date="2004" name="Nature">
        <title>Genome sequence of the Brown Norway rat yields insights into mammalian evolution.</title>
        <authorList>
            <person name="Gibbs R.A."/>
            <person name="Weinstock G.M."/>
            <person name="Metzker M.L."/>
            <person name="Muzny D.M."/>
            <person name="Sodergren E.J."/>
            <person name="Scherer S."/>
            <person name="Scott G."/>
            <person name="Steffen D."/>
            <person name="Worley K.C."/>
            <person name="Burch P.E."/>
            <person name="Okwuonu G."/>
            <person name="Hines S."/>
            <person name="Lewis L."/>
            <person name="Deramo C."/>
            <person name="Delgado O."/>
            <person name="Dugan-Rocha S."/>
            <person name="Miner G."/>
            <person name="Morgan M."/>
            <person name="Hawes A."/>
            <person name="Gill R."/>
            <person name="Holt R.A."/>
            <person name="Adams M.D."/>
            <person name="Amanatides P.G."/>
            <person name="Baden-Tillson H."/>
            <person name="Barnstead M."/>
            <person name="Chin S."/>
            <person name="Evans C.A."/>
            <person name="Ferriera S."/>
            <person name="Fosler C."/>
            <person name="Glodek A."/>
            <person name="Gu Z."/>
            <person name="Jennings D."/>
            <person name="Kraft C.L."/>
            <person name="Nguyen T."/>
            <person name="Pfannkoch C.M."/>
            <person name="Sitter C."/>
            <person name="Sutton G.G."/>
            <person name="Venter J.C."/>
            <person name="Woodage T."/>
            <person name="Smith D."/>
            <person name="Lee H.-M."/>
            <person name="Gustafson E."/>
            <person name="Cahill P."/>
            <person name="Kana A."/>
            <person name="Doucette-Stamm L."/>
            <person name="Weinstock K."/>
            <person name="Fechtel K."/>
            <person name="Weiss R.B."/>
            <person name="Dunn D.M."/>
            <person name="Green E.D."/>
            <person name="Blakesley R.W."/>
            <person name="Bouffard G.G."/>
            <person name="De Jong P.J."/>
            <person name="Osoegawa K."/>
            <person name="Zhu B."/>
            <person name="Marra M."/>
            <person name="Schein J."/>
            <person name="Bosdet I."/>
            <person name="Fjell C."/>
            <person name="Jones S."/>
            <person name="Krzywinski M."/>
            <person name="Mathewson C."/>
            <person name="Siddiqui A."/>
            <person name="Wye N."/>
            <person name="McPherson J."/>
            <person name="Zhao S."/>
            <person name="Fraser C.M."/>
            <person name="Shetty J."/>
            <person name="Shatsman S."/>
            <person name="Geer K."/>
            <person name="Chen Y."/>
            <person name="Abramzon S."/>
            <person name="Nierman W.C."/>
            <person name="Havlak P.H."/>
            <person name="Chen R."/>
            <person name="Durbin K.J."/>
            <person name="Egan A."/>
            <person name="Ren Y."/>
            <person name="Song X.-Z."/>
            <person name="Li B."/>
            <person name="Liu Y."/>
            <person name="Qin X."/>
            <person name="Cawley S."/>
            <person name="Cooney A.J."/>
            <person name="D'Souza L.M."/>
            <person name="Martin K."/>
            <person name="Wu J.Q."/>
            <person name="Gonzalez-Garay M.L."/>
            <person name="Jackson A.R."/>
            <person name="Kalafus K.J."/>
            <person name="McLeod M.P."/>
            <person name="Milosavljevic A."/>
            <person name="Virk D."/>
            <person name="Volkov A."/>
            <person name="Wheeler D.A."/>
            <person name="Zhang Z."/>
            <person name="Bailey J.A."/>
            <person name="Eichler E.E."/>
            <person name="Tuzun E."/>
            <person name="Birney E."/>
            <person name="Mongin E."/>
            <person name="Ureta-Vidal A."/>
            <person name="Woodwark C."/>
            <person name="Zdobnov E."/>
            <person name="Bork P."/>
            <person name="Suyama M."/>
            <person name="Torrents D."/>
            <person name="Alexandersson M."/>
            <person name="Trask B.J."/>
            <person name="Young J.M."/>
            <person name="Huang H."/>
            <person name="Wang H."/>
            <person name="Xing H."/>
            <person name="Daniels S."/>
            <person name="Gietzen D."/>
            <person name="Schmidt J."/>
            <person name="Stevens K."/>
            <person name="Vitt U."/>
            <person name="Wingrove J."/>
            <person name="Camara F."/>
            <person name="Mar Alba M."/>
            <person name="Abril J.F."/>
            <person name="Guigo R."/>
            <person name="Smit A."/>
            <person name="Dubchak I."/>
            <person name="Rubin E.M."/>
            <person name="Couronne O."/>
            <person name="Poliakov A."/>
            <person name="Huebner N."/>
            <person name="Ganten D."/>
            <person name="Goesele C."/>
            <person name="Hummel O."/>
            <person name="Kreitler T."/>
            <person name="Lee Y.-A."/>
            <person name="Monti J."/>
            <person name="Schulz H."/>
            <person name="Zimdahl H."/>
            <person name="Himmelbauer H."/>
            <person name="Lehrach H."/>
            <person name="Jacob H.J."/>
            <person name="Bromberg S."/>
            <person name="Gullings-Handley J."/>
            <person name="Jensen-Seaman M.I."/>
            <person name="Kwitek A.E."/>
            <person name="Lazar J."/>
            <person name="Pasko D."/>
            <person name="Tonellato P.J."/>
            <person name="Twigger S."/>
            <person name="Ponting C.P."/>
            <person name="Duarte J.M."/>
            <person name="Rice S."/>
            <person name="Goodstadt L."/>
            <person name="Beatson S.A."/>
            <person name="Emes R.D."/>
            <person name="Winter E.E."/>
            <person name="Webber C."/>
            <person name="Brandt P."/>
            <person name="Nyakatura G."/>
            <person name="Adetobi M."/>
            <person name="Chiaromonte F."/>
            <person name="Elnitski L."/>
            <person name="Eswara P."/>
            <person name="Hardison R.C."/>
            <person name="Hou M."/>
            <person name="Kolbe D."/>
            <person name="Makova K."/>
            <person name="Miller W."/>
            <person name="Nekrutenko A."/>
            <person name="Riemer C."/>
            <person name="Schwartz S."/>
            <person name="Taylor J."/>
            <person name="Yang S."/>
            <person name="Zhang Y."/>
            <person name="Lindpaintner K."/>
            <person name="Andrews T.D."/>
            <person name="Caccamo M."/>
            <person name="Clamp M."/>
            <person name="Clarke L."/>
            <person name="Curwen V."/>
            <person name="Durbin R.M."/>
            <person name="Eyras E."/>
            <person name="Searle S.M."/>
            <person name="Cooper G.M."/>
            <person name="Batzoglou S."/>
            <person name="Brudno M."/>
            <person name="Sidow A."/>
            <person name="Stone E.A."/>
            <person name="Payseur B.A."/>
            <person name="Bourque G."/>
            <person name="Lopez-Otin C."/>
            <person name="Puente X.S."/>
            <person name="Chakrabarti K."/>
            <person name="Chatterji S."/>
            <person name="Dewey C."/>
            <person name="Pachter L."/>
            <person name="Bray N."/>
            <person name="Yap V.B."/>
            <person name="Caspi A."/>
            <person name="Tesler G."/>
            <person name="Pevzner P.A."/>
            <person name="Haussler D."/>
            <person name="Roskin K.M."/>
            <person name="Baertsch R."/>
            <person name="Clawson H."/>
            <person name="Furey T.S."/>
            <person name="Hinrichs A.S."/>
            <person name="Karolchik D."/>
            <person name="Kent W.J."/>
            <person name="Rosenbloom K.R."/>
            <person name="Trumbower H."/>
            <person name="Weirauch M."/>
            <person name="Cooper D.N."/>
            <person name="Stenson P.D."/>
            <person name="Ma B."/>
            <person name="Brent M."/>
            <person name="Arumugam M."/>
            <person name="Shteynberg D."/>
            <person name="Copley R.R."/>
            <person name="Taylor M.S."/>
            <person name="Riethman H."/>
            <person name="Mudunuri U."/>
            <person name="Peterson J."/>
            <person name="Guyer M."/>
            <person name="Felsenfeld A."/>
            <person name="Old S."/>
            <person name="Mockrin S."/>
            <person name="Collins F.S."/>
        </authorList>
    </citation>
    <scope>NUCLEOTIDE SEQUENCE [LARGE SCALE GENOMIC DNA] (ISOFORMS 1 AND 2)</scope>
    <source>
        <strain>Brown Norway</strain>
    </source>
</reference>
<keyword id="KW-0025">Alternative splicing</keyword>
<keyword id="KW-1015">Disulfide bond</keyword>
<keyword id="KW-0378">Hydrolase</keyword>
<keyword id="KW-0645">Protease</keyword>
<keyword id="KW-1185">Reference proteome</keyword>
<keyword id="KW-0964">Secreted</keyword>
<keyword id="KW-0720">Serine protease</keyword>
<keyword id="KW-0732">Signal</keyword>
<feature type="signal peptide" evidence="4">
    <location>
        <begin position="1"/>
        <end position="23"/>
    </location>
</feature>
<feature type="chain" id="PRO_0000417598" description="Serine protease HTRA3">
    <location>
        <begin position="24"/>
        <end position="459"/>
    </location>
</feature>
<feature type="domain" description="IGFBP N-terminal" evidence="6">
    <location>
        <begin position="27"/>
        <end position="90"/>
    </location>
</feature>
<feature type="domain" description="Kazal-like" evidence="7">
    <location>
        <begin position="76"/>
        <end position="134"/>
    </location>
</feature>
<feature type="domain" description="PDZ" evidence="5">
    <location>
        <begin position="365"/>
        <end position="450"/>
    </location>
</feature>
<feature type="region of interest" description="Serine protease" evidence="1">
    <location>
        <begin position="181"/>
        <end position="346"/>
    </location>
</feature>
<feature type="active site" description="Charge relay system" evidence="2">
    <location>
        <position position="197"/>
    </location>
</feature>
<feature type="active site" description="Charge relay system" evidence="2">
    <location>
        <position position="233"/>
    </location>
</feature>
<feature type="active site" description="Charge relay system" evidence="2">
    <location>
        <position position="311"/>
    </location>
</feature>
<feature type="disulfide bond" evidence="6">
    <location>
        <begin position="31"/>
        <end position="54"/>
    </location>
</feature>
<feature type="disulfide bond" evidence="6">
    <location>
        <begin position="35"/>
        <end position="56"/>
    </location>
</feature>
<feature type="disulfide bond" evidence="6">
    <location>
        <begin position="40"/>
        <end position="57"/>
    </location>
</feature>
<feature type="disulfide bond" evidence="6">
    <location>
        <begin position="45"/>
        <end position="60"/>
    </location>
</feature>
<feature type="disulfide bond" evidence="6">
    <location>
        <begin position="68"/>
        <end position="82"/>
    </location>
</feature>
<feature type="disulfide bond" evidence="6">
    <location>
        <begin position="76"/>
        <end position="87"/>
    </location>
</feature>
<feature type="disulfide bond" evidence="10">
    <location>
        <begin position="89"/>
        <end position="107"/>
    </location>
</feature>
<feature type="disulfide bond" evidence="7">
    <location>
        <begin position="96"/>
        <end position="132"/>
    </location>
</feature>
<feature type="splice variant" id="VSP_043827" description="In isoform 2." evidence="9">
    <original>DWKKRFI</original>
    <variation>ALSRALH</variation>
    <location>
        <begin position="357"/>
        <end position="363"/>
    </location>
</feature>
<feature type="splice variant" id="VSP_043828" description="In isoform 2." evidence="9">
    <location>
        <begin position="364"/>
        <end position="459"/>
    </location>
</feature>
<name>HTRA3_RAT</name>
<gene>
    <name type="primary">Htra3</name>
    <name type="synonym">Prsp</name>
</gene>
<organism>
    <name type="scientific">Rattus norvegicus</name>
    <name type="common">Rat</name>
    <dbReference type="NCBI Taxonomy" id="10116"/>
    <lineage>
        <taxon>Eukaryota</taxon>
        <taxon>Metazoa</taxon>
        <taxon>Chordata</taxon>
        <taxon>Craniata</taxon>
        <taxon>Vertebrata</taxon>
        <taxon>Euteleostomi</taxon>
        <taxon>Mammalia</taxon>
        <taxon>Eutheria</taxon>
        <taxon>Euarchontoglires</taxon>
        <taxon>Glires</taxon>
        <taxon>Rodentia</taxon>
        <taxon>Myomorpha</taxon>
        <taxon>Muroidea</taxon>
        <taxon>Muridae</taxon>
        <taxon>Murinae</taxon>
        <taxon>Rattus</taxon>
    </lineage>
</organism>
<sequence>MQARALLPATLATLATLAVSVLAREPPAAPCPARCDVSRCPSPRCPGGYVPDLCNCCLVCAASEGEPCGRPLDSPCGDSLECVRGVCRCRWTHTVCGTDGHTYADVCALQAASRRALQISGTPVRQLQKGACPSGLHQLTSPRYKFNFIADVVEKIAPAVVHIELFLRHPLFGRNVPLSSGSGFIMSEAGLIVTNAHVVSSSNTASGRQQLKVQLQNGDAYEATIQDIDKKSDIATILIHPNKKLPVLLLGHSADLRPGEFVVAIGSPFALQNTVTTGIVSTAQRDGKELGLRDSDMDYIQTDAIINYGNSGGPLVNLDGEVIGINTLKVAAGISFAIPSDRITRFLSEFQDKHVKDWKKRFIGIRMRTITPSLVEELKTANPDFPAVSSGIYVQEVVPNSPSQRGGIQDGDIIVKVNGRPLVDSSELQEAVLNESSLLLEVRRGNDDLLFSIMPEVVM</sequence>
<evidence type="ECO:0000250" key="1"/>
<evidence type="ECO:0000250" key="2">
    <source>
        <dbReference type="UniProtKB" id="P83110"/>
    </source>
</evidence>
<evidence type="ECO:0000250" key="3">
    <source>
        <dbReference type="UniProtKB" id="Q9D236"/>
    </source>
</evidence>
<evidence type="ECO:0000255" key="4"/>
<evidence type="ECO:0000255" key="5">
    <source>
        <dbReference type="PROSITE-ProRule" id="PRU00143"/>
    </source>
</evidence>
<evidence type="ECO:0000255" key="6">
    <source>
        <dbReference type="PROSITE-ProRule" id="PRU00653"/>
    </source>
</evidence>
<evidence type="ECO:0000255" key="7">
    <source>
        <dbReference type="PROSITE-ProRule" id="PRU00798"/>
    </source>
</evidence>
<evidence type="ECO:0000269" key="8">
    <source>
    </source>
</evidence>
<evidence type="ECO:0000303" key="9">
    <source>
    </source>
</evidence>
<evidence type="ECO:0000305" key="10"/>
<accession>D3ZA76</accession>
<accession>D3ZLW3</accession>
<proteinExistence type="evidence at transcript level"/>